<accession>P63417</accession>
<accession>P45473</accession>
<accession>Q2M954</accession>
<sequence length="167" mass="18534">MLIRVEIPIDAPGIDALLRRSFESDAEAKLVHDLREDGFLTLGLVATDDEGQVIGYVAFSPVDVQGEDLQWVGMAPLAVDEKYRGQGLARQLVYEGLDSLNEFGYAAVVTLGDPALYSRFGFELAAHHDLRCRWPGTESAFQVHRLADDALNGVTGLVEYHEHFNRF</sequence>
<feature type="chain" id="PRO_0000074610" description="Uncharacterized N-acetyltransferase YhbS">
    <location>
        <begin position="1"/>
        <end position="167"/>
    </location>
</feature>
<feature type="domain" description="N-acetyltransferase" evidence="1">
    <location>
        <begin position="1"/>
        <end position="148"/>
    </location>
</feature>
<proteinExistence type="inferred from homology"/>
<gene>
    <name type="primary">yhbS</name>
    <name type="ordered locus">b3156</name>
    <name type="ordered locus">JW3125</name>
</gene>
<dbReference type="EC" id="2.3.1.-"/>
<dbReference type="EMBL" id="U18997">
    <property type="protein sequence ID" value="AAA57959.1"/>
    <property type="molecule type" value="Genomic_DNA"/>
</dbReference>
<dbReference type="EMBL" id="U00096">
    <property type="protein sequence ID" value="AAC76190.1"/>
    <property type="molecule type" value="Genomic_DNA"/>
</dbReference>
<dbReference type="EMBL" id="AP009048">
    <property type="protein sequence ID" value="BAE77202.1"/>
    <property type="molecule type" value="Genomic_DNA"/>
</dbReference>
<dbReference type="PIR" id="H65105">
    <property type="entry name" value="H65105"/>
</dbReference>
<dbReference type="RefSeq" id="NP_417625.1">
    <property type="nucleotide sequence ID" value="NC_000913.3"/>
</dbReference>
<dbReference type="RefSeq" id="WP_000908554.1">
    <property type="nucleotide sequence ID" value="NZ_STEB01000012.1"/>
</dbReference>
<dbReference type="SMR" id="P63417"/>
<dbReference type="BioGRID" id="4259273">
    <property type="interactions" value="24"/>
</dbReference>
<dbReference type="FunCoup" id="P63417">
    <property type="interactions" value="89"/>
</dbReference>
<dbReference type="IntAct" id="P63417">
    <property type="interactions" value="7"/>
</dbReference>
<dbReference type="STRING" id="511145.b3156"/>
<dbReference type="jPOST" id="P63417"/>
<dbReference type="PaxDb" id="511145-b3156"/>
<dbReference type="EnsemblBacteria" id="AAC76190">
    <property type="protein sequence ID" value="AAC76190"/>
    <property type="gene ID" value="b3156"/>
</dbReference>
<dbReference type="GeneID" id="947670"/>
<dbReference type="KEGG" id="ecj:JW3125"/>
<dbReference type="KEGG" id="eco:b3156"/>
<dbReference type="KEGG" id="ecoc:C3026_17190"/>
<dbReference type="PATRIC" id="fig|1411691.4.peg.3574"/>
<dbReference type="EchoBASE" id="EB2640"/>
<dbReference type="eggNOG" id="COG3153">
    <property type="taxonomic scope" value="Bacteria"/>
</dbReference>
<dbReference type="HOGENOM" id="CLU_081840_2_1_6"/>
<dbReference type="InParanoid" id="P63417"/>
<dbReference type="OMA" id="TRCHIGD"/>
<dbReference type="OrthoDB" id="9797178at2"/>
<dbReference type="PhylomeDB" id="P63417"/>
<dbReference type="BioCyc" id="EcoCyc:G7650-MONOMER"/>
<dbReference type="PRO" id="PR:P63417"/>
<dbReference type="Proteomes" id="UP000000625">
    <property type="component" value="Chromosome"/>
</dbReference>
<dbReference type="GO" id="GO:0005829">
    <property type="term" value="C:cytosol"/>
    <property type="evidence" value="ECO:0000314"/>
    <property type="project" value="EcoCyc"/>
</dbReference>
<dbReference type="GO" id="GO:0016747">
    <property type="term" value="F:acyltransferase activity, transferring groups other than amino-acyl groups"/>
    <property type="evidence" value="ECO:0000318"/>
    <property type="project" value="GO_Central"/>
</dbReference>
<dbReference type="CDD" id="cd04301">
    <property type="entry name" value="NAT_SF"/>
    <property type="match status" value="1"/>
</dbReference>
<dbReference type="FunFam" id="3.40.630.30:FF:000008">
    <property type="entry name" value="Acetyltransferase, GNAT family"/>
    <property type="match status" value="1"/>
</dbReference>
<dbReference type="Gene3D" id="3.40.630.30">
    <property type="match status" value="1"/>
</dbReference>
<dbReference type="InterPro" id="IPR016181">
    <property type="entry name" value="Acyl_CoA_acyltransferase"/>
</dbReference>
<dbReference type="InterPro" id="IPR000182">
    <property type="entry name" value="GNAT_dom"/>
</dbReference>
<dbReference type="Pfam" id="PF00583">
    <property type="entry name" value="Acetyltransf_1"/>
    <property type="match status" value="1"/>
</dbReference>
<dbReference type="SUPFAM" id="SSF55729">
    <property type="entry name" value="Acyl-CoA N-acyltransferases (Nat)"/>
    <property type="match status" value="1"/>
</dbReference>
<dbReference type="PROSITE" id="PS51186">
    <property type="entry name" value="GNAT"/>
    <property type="match status" value="1"/>
</dbReference>
<organism>
    <name type="scientific">Escherichia coli (strain K12)</name>
    <dbReference type="NCBI Taxonomy" id="83333"/>
    <lineage>
        <taxon>Bacteria</taxon>
        <taxon>Pseudomonadati</taxon>
        <taxon>Pseudomonadota</taxon>
        <taxon>Gammaproteobacteria</taxon>
        <taxon>Enterobacterales</taxon>
        <taxon>Enterobacteriaceae</taxon>
        <taxon>Escherichia</taxon>
    </lineage>
</organism>
<name>YHBS_ECOLI</name>
<reference key="1">
    <citation type="journal article" date="1997" name="Science">
        <title>The complete genome sequence of Escherichia coli K-12.</title>
        <authorList>
            <person name="Blattner F.R."/>
            <person name="Plunkett G. III"/>
            <person name="Bloch C.A."/>
            <person name="Perna N.T."/>
            <person name="Burland V."/>
            <person name="Riley M."/>
            <person name="Collado-Vides J."/>
            <person name="Glasner J.D."/>
            <person name="Rode C.K."/>
            <person name="Mayhew G.F."/>
            <person name="Gregor J."/>
            <person name="Davis N.W."/>
            <person name="Kirkpatrick H.A."/>
            <person name="Goeden M.A."/>
            <person name="Rose D.J."/>
            <person name="Mau B."/>
            <person name="Shao Y."/>
        </authorList>
    </citation>
    <scope>NUCLEOTIDE SEQUENCE [LARGE SCALE GENOMIC DNA]</scope>
    <source>
        <strain>K12 / MG1655 / ATCC 47076</strain>
    </source>
</reference>
<reference key="2">
    <citation type="journal article" date="2006" name="Mol. Syst. Biol.">
        <title>Highly accurate genome sequences of Escherichia coli K-12 strains MG1655 and W3110.</title>
        <authorList>
            <person name="Hayashi K."/>
            <person name="Morooka N."/>
            <person name="Yamamoto Y."/>
            <person name="Fujita K."/>
            <person name="Isono K."/>
            <person name="Choi S."/>
            <person name="Ohtsubo E."/>
            <person name="Baba T."/>
            <person name="Wanner B.L."/>
            <person name="Mori H."/>
            <person name="Horiuchi T."/>
        </authorList>
    </citation>
    <scope>NUCLEOTIDE SEQUENCE [LARGE SCALE GENOMIC DNA]</scope>
    <source>
        <strain>K12 / W3110 / ATCC 27325 / DSM 5911</strain>
    </source>
</reference>
<reference key="3">
    <citation type="journal article" date="2021" name="Proc. Natl. Acad. Sci. U.S.A.">
        <title>A fluorescence-based genetic screen reveals diverse mechanisms silencing small RNA signaling in E. coli.</title>
        <authorList>
            <person name="Chen J."/>
            <person name="To L."/>
            <person name="de Mets F."/>
            <person name="Luo X."/>
            <person name="Majdalani N."/>
            <person name="Tai C.H."/>
            <person name="Gottesman S."/>
        </authorList>
    </citation>
    <scope>FUNCTION</scope>
    <scope>DISRUPTION PHENOTYPE</scope>
    <source>
        <strain>K12 / MG1655 / ATCC 47076</strain>
    </source>
</reference>
<keyword id="KW-0012">Acyltransferase</keyword>
<keyword id="KW-1185">Reference proteome</keyword>
<keyword id="KW-0808">Transferase</keyword>
<evidence type="ECO:0000255" key="1">
    <source>
        <dbReference type="PROSITE-ProRule" id="PRU00532"/>
    </source>
</evidence>
<evidence type="ECO:0000269" key="2">
    <source>
    </source>
</evidence>
<evidence type="ECO:0000305" key="3"/>
<comment type="function">
    <text evidence="2">Upon overexpression suppresses small RNA (sRNA)-mediated RhyB-silencing of multiple RNA targets; overexpression leads to partial loss of RhyB sRNA and other sRNAs. May act via Hfq.</text>
</comment>
<comment type="disruption phenotype">
    <text evidence="2">No visible phenotype.</text>
</comment>
<comment type="similarity">
    <text evidence="3">Belongs to the acetyltransferase family.</text>
</comment>
<protein>
    <recommendedName>
        <fullName>Uncharacterized N-acetyltransferase YhbS</fullName>
        <ecNumber>2.3.1.-</ecNumber>
    </recommendedName>
</protein>